<dbReference type="EC" id="2.4.2.29" evidence="1"/>
<dbReference type="EMBL" id="CP000921">
    <property type="protein sequence ID" value="ACO22937.1"/>
    <property type="molecule type" value="Genomic_DNA"/>
</dbReference>
<dbReference type="RefSeq" id="WP_001285242.1">
    <property type="nucleotide sequence ID" value="NC_012469.1"/>
</dbReference>
<dbReference type="SMR" id="C1CTW4"/>
<dbReference type="KEGG" id="snt:SPT_2053"/>
<dbReference type="HOGENOM" id="CLU_022060_0_1_9"/>
<dbReference type="UniPathway" id="UPA00392"/>
<dbReference type="GO" id="GO:0005829">
    <property type="term" value="C:cytosol"/>
    <property type="evidence" value="ECO:0007669"/>
    <property type="project" value="TreeGrafter"/>
</dbReference>
<dbReference type="GO" id="GO:0046872">
    <property type="term" value="F:metal ion binding"/>
    <property type="evidence" value="ECO:0007669"/>
    <property type="project" value="UniProtKB-KW"/>
</dbReference>
<dbReference type="GO" id="GO:0008479">
    <property type="term" value="F:tRNA-guanosine(34) queuine transglycosylase activity"/>
    <property type="evidence" value="ECO:0007669"/>
    <property type="project" value="UniProtKB-UniRule"/>
</dbReference>
<dbReference type="GO" id="GO:0008616">
    <property type="term" value="P:queuosine biosynthetic process"/>
    <property type="evidence" value="ECO:0007669"/>
    <property type="project" value="UniProtKB-UniRule"/>
</dbReference>
<dbReference type="GO" id="GO:0002099">
    <property type="term" value="P:tRNA wobble guanine modification"/>
    <property type="evidence" value="ECO:0007669"/>
    <property type="project" value="TreeGrafter"/>
</dbReference>
<dbReference type="GO" id="GO:0101030">
    <property type="term" value="P:tRNA-guanine transglycosylation"/>
    <property type="evidence" value="ECO:0007669"/>
    <property type="project" value="InterPro"/>
</dbReference>
<dbReference type="FunFam" id="3.20.20.105:FF:000001">
    <property type="entry name" value="Queuine tRNA-ribosyltransferase"/>
    <property type="match status" value="1"/>
</dbReference>
<dbReference type="Gene3D" id="3.20.20.105">
    <property type="entry name" value="Queuine tRNA-ribosyltransferase-like"/>
    <property type="match status" value="1"/>
</dbReference>
<dbReference type="HAMAP" id="MF_00168">
    <property type="entry name" value="Q_tRNA_Tgt"/>
    <property type="match status" value="1"/>
</dbReference>
<dbReference type="InterPro" id="IPR050076">
    <property type="entry name" value="ArchSynthase1/Queuine_TRR"/>
</dbReference>
<dbReference type="InterPro" id="IPR004803">
    <property type="entry name" value="TGT"/>
</dbReference>
<dbReference type="InterPro" id="IPR036511">
    <property type="entry name" value="TGT-like_sf"/>
</dbReference>
<dbReference type="InterPro" id="IPR002616">
    <property type="entry name" value="tRNA_ribo_trans-like"/>
</dbReference>
<dbReference type="NCBIfam" id="TIGR00430">
    <property type="entry name" value="Q_tRNA_tgt"/>
    <property type="match status" value="1"/>
</dbReference>
<dbReference type="NCBIfam" id="TIGR00449">
    <property type="entry name" value="tgt_general"/>
    <property type="match status" value="1"/>
</dbReference>
<dbReference type="PANTHER" id="PTHR46499">
    <property type="entry name" value="QUEUINE TRNA-RIBOSYLTRANSFERASE"/>
    <property type="match status" value="1"/>
</dbReference>
<dbReference type="PANTHER" id="PTHR46499:SF1">
    <property type="entry name" value="QUEUINE TRNA-RIBOSYLTRANSFERASE"/>
    <property type="match status" value="1"/>
</dbReference>
<dbReference type="Pfam" id="PF01702">
    <property type="entry name" value="TGT"/>
    <property type="match status" value="1"/>
</dbReference>
<dbReference type="SUPFAM" id="SSF51713">
    <property type="entry name" value="tRNA-guanine transglycosylase"/>
    <property type="match status" value="1"/>
</dbReference>
<proteinExistence type="inferred from homology"/>
<name>TGT_STRZT</name>
<evidence type="ECO:0000255" key="1">
    <source>
        <dbReference type="HAMAP-Rule" id="MF_00168"/>
    </source>
</evidence>
<comment type="function">
    <text evidence="1">Catalyzes the base-exchange of a guanine (G) residue with the queuine precursor 7-aminomethyl-7-deazaguanine (PreQ1) at position 34 (anticodon wobble position) in tRNAs with GU(N) anticodons (tRNA-Asp, -Asn, -His and -Tyr). Catalysis occurs through a double-displacement mechanism. The nucleophile active site attacks the C1' of nucleotide 34 to detach the guanine base from the RNA, forming a covalent enzyme-RNA intermediate. The proton acceptor active site deprotonates the incoming PreQ1, allowing a nucleophilic attack on the C1' of the ribose to form the product. After dissociation, two additional enzymatic reactions on the tRNA convert PreQ1 to queuine (Q), resulting in the hypermodified nucleoside queuosine (7-(((4,5-cis-dihydroxy-2-cyclopenten-1-yl)amino)methyl)-7-deazaguanosine).</text>
</comment>
<comment type="catalytic activity">
    <reaction evidence="1">
        <text>7-aminomethyl-7-carbaguanine + guanosine(34) in tRNA = 7-aminomethyl-7-carbaguanosine(34) in tRNA + guanine</text>
        <dbReference type="Rhea" id="RHEA:24104"/>
        <dbReference type="Rhea" id="RHEA-COMP:10341"/>
        <dbReference type="Rhea" id="RHEA-COMP:10342"/>
        <dbReference type="ChEBI" id="CHEBI:16235"/>
        <dbReference type="ChEBI" id="CHEBI:58703"/>
        <dbReference type="ChEBI" id="CHEBI:74269"/>
        <dbReference type="ChEBI" id="CHEBI:82833"/>
        <dbReference type="EC" id="2.4.2.29"/>
    </reaction>
</comment>
<comment type="cofactor">
    <cofactor evidence="1">
        <name>Zn(2+)</name>
        <dbReference type="ChEBI" id="CHEBI:29105"/>
    </cofactor>
    <text evidence="1">Binds 1 zinc ion per subunit.</text>
</comment>
<comment type="pathway">
    <text evidence="1">tRNA modification; tRNA-queuosine biosynthesis.</text>
</comment>
<comment type="subunit">
    <text evidence="1">Homodimer. Within each dimer, one monomer is responsible for RNA recognition and catalysis, while the other monomer binds to the replacement base PreQ1.</text>
</comment>
<comment type="similarity">
    <text evidence="1">Belongs to the queuine tRNA-ribosyltransferase family.</text>
</comment>
<accession>C1CTW4</accession>
<protein>
    <recommendedName>
        <fullName evidence="1">Queuine tRNA-ribosyltransferase</fullName>
        <ecNumber evidence="1">2.4.2.29</ecNumber>
    </recommendedName>
    <alternativeName>
        <fullName evidence="1">Guanine insertion enzyme</fullName>
    </alternativeName>
    <alternativeName>
        <fullName evidence="1">tRNA-guanine transglycosylase</fullName>
    </alternativeName>
</protein>
<reference key="1">
    <citation type="journal article" date="2010" name="Genome Biol.">
        <title>Structure and dynamics of the pan-genome of Streptococcus pneumoniae and closely related species.</title>
        <authorList>
            <person name="Donati C."/>
            <person name="Hiller N.L."/>
            <person name="Tettelin H."/>
            <person name="Muzzi A."/>
            <person name="Croucher N.J."/>
            <person name="Angiuoli S.V."/>
            <person name="Oggioni M."/>
            <person name="Dunning Hotopp J.C."/>
            <person name="Hu F.Z."/>
            <person name="Riley D.R."/>
            <person name="Covacci A."/>
            <person name="Mitchell T.J."/>
            <person name="Bentley S.D."/>
            <person name="Kilian M."/>
            <person name="Ehrlich G.D."/>
            <person name="Rappuoli R."/>
            <person name="Moxon E.R."/>
            <person name="Masignani V."/>
        </authorList>
    </citation>
    <scope>NUCLEOTIDE SEQUENCE [LARGE SCALE GENOMIC DNA]</scope>
    <source>
        <strain>Taiwan19F-14</strain>
    </source>
</reference>
<keyword id="KW-0328">Glycosyltransferase</keyword>
<keyword id="KW-0479">Metal-binding</keyword>
<keyword id="KW-0671">Queuosine biosynthesis</keyword>
<keyword id="KW-0808">Transferase</keyword>
<keyword id="KW-0819">tRNA processing</keyword>
<keyword id="KW-0862">Zinc</keyword>
<feature type="chain" id="PRO_1000198030" description="Queuine tRNA-ribosyltransferase">
    <location>
        <begin position="1"/>
        <end position="380"/>
    </location>
</feature>
<feature type="region of interest" description="RNA binding" evidence="1">
    <location>
        <begin position="251"/>
        <end position="257"/>
    </location>
</feature>
<feature type="region of interest" description="RNA binding; important for wobble base 34 recognition" evidence="1">
    <location>
        <begin position="275"/>
        <end position="279"/>
    </location>
</feature>
<feature type="active site" description="Proton acceptor" evidence="1">
    <location>
        <position position="96"/>
    </location>
</feature>
<feature type="active site" description="Nucleophile" evidence="1">
    <location>
        <position position="270"/>
    </location>
</feature>
<feature type="binding site" evidence="1">
    <location>
        <begin position="96"/>
        <end position="100"/>
    </location>
    <ligand>
        <name>substrate</name>
    </ligand>
</feature>
<feature type="binding site" evidence="1">
    <location>
        <position position="150"/>
    </location>
    <ligand>
        <name>substrate</name>
    </ligand>
</feature>
<feature type="binding site" evidence="1">
    <location>
        <position position="193"/>
    </location>
    <ligand>
        <name>substrate</name>
    </ligand>
</feature>
<feature type="binding site" evidence="1">
    <location>
        <position position="220"/>
    </location>
    <ligand>
        <name>substrate</name>
    </ligand>
</feature>
<feature type="binding site" evidence="1">
    <location>
        <position position="308"/>
    </location>
    <ligand>
        <name>Zn(2+)</name>
        <dbReference type="ChEBI" id="CHEBI:29105"/>
    </ligand>
</feature>
<feature type="binding site" evidence="1">
    <location>
        <position position="310"/>
    </location>
    <ligand>
        <name>Zn(2+)</name>
        <dbReference type="ChEBI" id="CHEBI:29105"/>
    </ligand>
</feature>
<feature type="binding site" evidence="1">
    <location>
        <position position="313"/>
    </location>
    <ligand>
        <name>Zn(2+)</name>
        <dbReference type="ChEBI" id="CHEBI:29105"/>
    </ligand>
</feature>
<feature type="binding site" evidence="1">
    <location>
        <position position="339"/>
    </location>
    <ligand>
        <name>Zn(2+)</name>
        <dbReference type="ChEBI" id="CHEBI:29105"/>
    </ligand>
</feature>
<sequence>MSDSPIKYRLIKKEKHTGARLGEIITPHGTFPTPMFMPVGTQATVKTQSPEELKEMGSGIILSNTYHLWLRPGDELIARAGGLHKFMNWDQPILTDSGGFQVYSLADSRNITEEGVTFKNHLNGSKMFLSPEKAISIQNNLGSDIMMSFDECPQFYQPYDYVKKSIERTSRWAERGLKAHRRPHDQGLFGIVQGAGFEDLRRQSAHDLVSMDFSGYSIGGLAVGETHEEMNAVLDFTTQLLPENKPRYLMGVGAPDSLIDGVIRGVDMFDCVLPTRIARNGTCMTSQGRLVVKNAQFAEDFTPLDPECDCYTCNNYTRAYLRHLLKADETFGIRLTSYHNLYFLLNLMKQVRQAIMDDNLLEFRKYFVEKYGYNKSGRNF</sequence>
<gene>
    <name evidence="1" type="primary">tgt</name>
    <name type="ordered locus">SPT_2053</name>
</gene>
<organism>
    <name type="scientific">Streptococcus pneumoniae (strain Taiwan19F-14)</name>
    <dbReference type="NCBI Taxonomy" id="487213"/>
    <lineage>
        <taxon>Bacteria</taxon>
        <taxon>Bacillati</taxon>
        <taxon>Bacillota</taxon>
        <taxon>Bacilli</taxon>
        <taxon>Lactobacillales</taxon>
        <taxon>Streptococcaceae</taxon>
        <taxon>Streptococcus</taxon>
    </lineage>
</organism>